<reference key="1">
    <citation type="submission" date="2008-02" db="EMBL/GenBank/DDBJ databases">
        <title>Complete sequence of chromosome 2 of Burkholderia cenocepacia MC0-3.</title>
        <authorList>
            <person name="Copeland A."/>
            <person name="Lucas S."/>
            <person name="Lapidus A."/>
            <person name="Barry K."/>
            <person name="Bruce D."/>
            <person name="Goodwin L."/>
            <person name="Glavina del Rio T."/>
            <person name="Dalin E."/>
            <person name="Tice H."/>
            <person name="Pitluck S."/>
            <person name="Chain P."/>
            <person name="Malfatti S."/>
            <person name="Shin M."/>
            <person name="Vergez L."/>
            <person name="Schmutz J."/>
            <person name="Larimer F."/>
            <person name="Land M."/>
            <person name="Hauser L."/>
            <person name="Kyrpides N."/>
            <person name="Mikhailova N."/>
            <person name="Tiedje J."/>
            <person name="Richardson P."/>
        </authorList>
    </citation>
    <scope>NUCLEOTIDE SEQUENCE [LARGE SCALE GENOMIC DNA]</scope>
    <source>
        <strain>MC0-3</strain>
    </source>
</reference>
<comment type="function">
    <text evidence="1">May be involved in recombination.</text>
</comment>
<comment type="subcellular location">
    <subcellularLocation>
        <location evidence="1">Cytoplasm</location>
        <location evidence="1">Nucleoid</location>
    </subcellularLocation>
</comment>
<comment type="similarity">
    <text evidence="1">Belongs to the RdgC family.</text>
</comment>
<organism>
    <name type="scientific">Burkholderia orbicola (strain MC0-3)</name>
    <dbReference type="NCBI Taxonomy" id="406425"/>
    <lineage>
        <taxon>Bacteria</taxon>
        <taxon>Pseudomonadati</taxon>
        <taxon>Pseudomonadota</taxon>
        <taxon>Betaproteobacteria</taxon>
        <taxon>Burkholderiales</taxon>
        <taxon>Burkholderiaceae</taxon>
        <taxon>Burkholderia</taxon>
        <taxon>Burkholderia cepacia complex</taxon>
        <taxon>Burkholderia orbicola</taxon>
    </lineage>
</organism>
<dbReference type="EMBL" id="CP000959">
    <property type="protein sequence ID" value="ACA95000.1"/>
    <property type="molecule type" value="Genomic_DNA"/>
</dbReference>
<dbReference type="RefSeq" id="WP_012339947.1">
    <property type="nucleotide sequence ID" value="NC_010515.1"/>
</dbReference>
<dbReference type="SMR" id="B1K4Q5"/>
<dbReference type="GeneID" id="83052537"/>
<dbReference type="KEGG" id="bcm:Bcenmc03_5879"/>
<dbReference type="HOGENOM" id="CLU_052038_1_1_4"/>
<dbReference type="Proteomes" id="UP000002169">
    <property type="component" value="Chromosome 2"/>
</dbReference>
<dbReference type="GO" id="GO:0043590">
    <property type="term" value="C:bacterial nucleoid"/>
    <property type="evidence" value="ECO:0007669"/>
    <property type="project" value="TreeGrafter"/>
</dbReference>
<dbReference type="GO" id="GO:0005737">
    <property type="term" value="C:cytoplasm"/>
    <property type="evidence" value="ECO:0007669"/>
    <property type="project" value="UniProtKB-UniRule"/>
</dbReference>
<dbReference type="GO" id="GO:0003690">
    <property type="term" value="F:double-stranded DNA binding"/>
    <property type="evidence" value="ECO:0007669"/>
    <property type="project" value="TreeGrafter"/>
</dbReference>
<dbReference type="GO" id="GO:0006310">
    <property type="term" value="P:DNA recombination"/>
    <property type="evidence" value="ECO:0007669"/>
    <property type="project" value="UniProtKB-UniRule"/>
</dbReference>
<dbReference type="GO" id="GO:0000018">
    <property type="term" value="P:regulation of DNA recombination"/>
    <property type="evidence" value="ECO:0007669"/>
    <property type="project" value="TreeGrafter"/>
</dbReference>
<dbReference type="HAMAP" id="MF_00194">
    <property type="entry name" value="RdgC"/>
    <property type="match status" value="1"/>
</dbReference>
<dbReference type="InterPro" id="IPR007476">
    <property type="entry name" value="RdgC"/>
</dbReference>
<dbReference type="NCBIfam" id="NF001463">
    <property type="entry name" value="PRK00321.1-4"/>
    <property type="match status" value="1"/>
</dbReference>
<dbReference type="NCBIfam" id="NF001464">
    <property type="entry name" value="PRK00321.1-5"/>
    <property type="match status" value="1"/>
</dbReference>
<dbReference type="PANTHER" id="PTHR38103">
    <property type="entry name" value="RECOMBINATION-ASSOCIATED PROTEIN RDGC"/>
    <property type="match status" value="1"/>
</dbReference>
<dbReference type="PANTHER" id="PTHR38103:SF1">
    <property type="entry name" value="RECOMBINATION-ASSOCIATED PROTEIN RDGC"/>
    <property type="match status" value="1"/>
</dbReference>
<dbReference type="Pfam" id="PF04381">
    <property type="entry name" value="RdgC"/>
    <property type="match status" value="1"/>
</dbReference>
<feature type="chain" id="PRO_1000099056" description="Recombination-associated protein RdgC">
    <location>
        <begin position="1"/>
        <end position="307"/>
    </location>
</feature>
<accession>B1K4Q5</accession>
<protein>
    <recommendedName>
        <fullName evidence="1">Recombination-associated protein RdgC</fullName>
    </recommendedName>
</protein>
<name>RDGC_BURO0</name>
<sequence>MWFKNLQLHRLPAPWAVTPDQMEKWLAPHAFQPGSSVEMQRVGWASPRDDGALVYSNNRQMLLLFRAEKKLLPASVVNQVTKARALEVEEQQGFKVGRKQLRELKEQVTDELLPRAFSIRRDTRVWIDTANGWLVIDAAAQALADDVRSLLVKSIDQLPLAGVHVARSPVAAMTDWLLSGEAPGGFTVDQDAELRSSGEGGATVRYVGHALEANDMRRHIEAGKQCMRLAMTWNDRISFVLTPSLTIKRVTPLDVIKEAADPTAQNDDERFDSDFTLMTGELARMLASLVDILGGDQQDAIQQAAAA</sequence>
<proteinExistence type="inferred from homology"/>
<evidence type="ECO:0000255" key="1">
    <source>
        <dbReference type="HAMAP-Rule" id="MF_00194"/>
    </source>
</evidence>
<gene>
    <name evidence="1" type="primary">rdgC</name>
    <name type="ordered locus">Bcenmc03_5879</name>
</gene>
<keyword id="KW-0963">Cytoplasm</keyword>
<keyword id="KW-0233">DNA recombination</keyword>